<organismHost>
    <name type="scientific">Aves</name>
    <dbReference type="NCBI Taxonomy" id="8782"/>
</organismHost>
<organismHost>
    <name type="scientific">Sus scrofa</name>
    <name type="common">Pig</name>
    <dbReference type="NCBI Taxonomy" id="9823"/>
</organismHost>
<feature type="chain" id="PRO_0000279626" description="Polymerase basic protein 2">
    <location>
        <begin position="1"/>
        <end position="759"/>
    </location>
</feature>
<feature type="short sequence motif" description="Nuclear localization signal" evidence="1">
    <location>
        <begin position="736"/>
        <end position="739"/>
    </location>
</feature>
<feature type="site" description="Avian adaptation" evidence="1">
    <location>
        <position position="627"/>
    </location>
</feature>
<sequence>MERIKELRDLLSQSRTREILTKTTVDHMAIIKKYTSGRQEKNPALRMKWMMAMKYPITADKRIMEMIPERNEQGQTLWSKTNDAGSDRVMVSPLAVTWWNRNGPATSTVHYPKVYKTYFEKVERLKHGTFGPVHFRNQVKIRRRVDINPGHADLSAKEAQDVIMEVVFPNEVGARILTSESQLTITKEKKEELQDCKIAPLMVAYMLERELVRKTRFLPVAGGTSSVYIEVLHLTQGTCWEQMYTPGGEVRNDDVDQSLIIAARNIVRRATVSADPLASLLEMCHSTQIGGIRMVDILRQNPTEEQAVDICKAAMGLRISSSFSFGGFTFKRTSGSSVKREEEVLTGNLQTLKIRVHEGYEEFTMVGRRATAILRKATRRLIQLIVSGRDEQSIAEAIIVAMVFSQEDCMIKAVRGDLNFVNRANQRLNPMHQLLRHFQKDAKVLFQNWGIEPIDNVMGMIGILPDMTPSTEMSLRGLRVSKMGVDEYSSTERVVVSIDRFLRVRDQRGNVLLSPEEVSETQGTEKLTITYSSSMMWEINGPESVLVNTYQWIIRNWETVKIQWSQDPTMLYNKMEFEPFQSLVPKAARGQYSGFVRTLFQQMRDVLGTFDTVQIIKLLPFAAAPPEQSRMQFSSLTVNVRGSGMRILVRGNSPVFNYNKATKRLTVLGKDAGALTEDPDEGTAGVESAVLRGFLILGKEDKRYGPALSINELSNLAKGEKANVLIGQGDVVLVMKRKRDSSILTDSQTATKRIRMAIN</sequence>
<evidence type="ECO:0000255" key="1">
    <source>
        <dbReference type="HAMAP-Rule" id="MF_04062"/>
    </source>
</evidence>
<name>PB2_I56A1</name>
<keyword id="KW-1157">Cap snatching</keyword>
<keyword id="KW-1262">Eukaryotic host gene expression shutoff by virus</keyword>
<keyword id="KW-1191">Eukaryotic host transcription shutoff by virus</keyword>
<keyword id="KW-1190">Host gene expression shutoff by virus</keyword>
<keyword id="KW-1048">Host nucleus</keyword>
<keyword id="KW-0945">Host-virus interaction</keyword>
<keyword id="KW-1104">Inhibition of host RNA polymerase II by virus</keyword>
<keyword id="KW-0506">mRNA capping</keyword>
<keyword id="KW-0507">mRNA processing</keyword>
<keyword id="KW-1195">Viral transcription</keyword>
<keyword id="KW-0946">Virion</keyword>
<dbReference type="EMBL" id="CY005822">
    <property type="protein sequence ID" value="ABB90230.1"/>
    <property type="molecule type" value="Genomic_RNA"/>
</dbReference>
<dbReference type="SMR" id="Q20P12"/>
<dbReference type="PRO" id="PR:Q20P12"/>
<dbReference type="Proteomes" id="UP000008434">
    <property type="component" value="Genome"/>
</dbReference>
<dbReference type="Proteomes" id="UP000108613">
    <property type="component" value="Genome"/>
</dbReference>
<dbReference type="GO" id="GO:0042025">
    <property type="term" value="C:host cell nucleus"/>
    <property type="evidence" value="ECO:0007669"/>
    <property type="project" value="UniProtKB-SubCell"/>
</dbReference>
<dbReference type="GO" id="GO:0044423">
    <property type="term" value="C:virion component"/>
    <property type="evidence" value="ECO:0007669"/>
    <property type="project" value="UniProtKB-UniRule"/>
</dbReference>
<dbReference type="GO" id="GO:0003723">
    <property type="term" value="F:RNA binding"/>
    <property type="evidence" value="ECO:0007669"/>
    <property type="project" value="UniProtKB-UniRule"/>
</dbReference>
<dbReference type="GO" id="GO:0003968">
    <property type="term" value="F:RNA-directed RNA polymerase activity"/>
    <property type="evidence" value="ECO:0007669"/>
    <property type="project" value="UniProtKB-UniRule"/>
</dbReference>
<dbReference type="GO" id="GO:0006370">
    <property type="term" value="P:7-methylguanosine mRNA capping"/>
    <property type="evidence" value="ECO:0007669"/>
    <property type="project" value="UniProtKB-UniRule"/>
</dbReference>
<dbReference type="GO" id="GO:0075526">
    <property type="term" value="P:cap snatching"/>
    <property type="evidence" value="ECO:0007669"/>
    <property type="project" value="UniProtKB-UniRule"/>
</dbReference>
<dbReference type="GO" id="GO:0006351">
    <property type="term" value="P:DNA-templated transcription"/>
    <property type="evidence" value="ECO:0007669"/>
    <property type="project" value="UniProtKB-UniRule"/>
</dbReference>
<dbReference type="GO" id="GO:0039657">
    <property type="term" value="P:symbiont-mediated suppression of host gene expression"/>
    <property type="evidence" value="ECO:0007669"/>
    <property type="project" value="UniProtKB-KW"/>
</dbReference>
<dbReference type="GO" id="GO:0039523">
    <property type="term" value="P:symbiont-mediated suppression of host mRNA transcription via inhibition of RNA polymerase II activity"/>
    <property type="evidence" value="ECO:0007669"/>
    <property type="project" value="UniProtKB-UniRule"/>
</dbReference>
<dbReference type="GO" id="GO:0039694">
    <property type="term" value="P:viral RNA genome replication"/>
    <property type="evidence" value="ECO:0007669"/>
    <property type="project" value="InterPro"/>
</dbReference>
<dbReference type="FunFam" id="3.30.30.90:FF:000001">
    <property type="entry name" value="Polymerase basic protein 2"/>
    <property type="match status" value="1"/>
</dbReference>
<dbReference type="Gene3D" id="3.30.30.90">
    <property type="entry name" value="Polymerase Basic Protein 2, C-terminal domain"/>
    <property type="match status" value="1"/>
</dbReference>
<dbReference type="HAMAP" id="MF_04062">
    <property type="entry name" value="INV_PB2"/>
    <property type="match status" value="1"/>
</dbReference>
<dbReference type="InterPro" id="IPR049110">
    <property type="entry name" value="Flu_PB2_2nd"/>
</dbReference>
<dbReference type="InterPro" id="IPR049114">
    <property type="entry name" value="Flu_PB2_6th"/>
</dbReference>
<dbReference type="InterPro" id="IPR049115">
    <property type="entry name" value="Flu_PB2_C"/>
</dbReference>
<dbReference type="InterPro" id="IPR048298">
    <property type="entry name" value="Flu_PB2_CAP-bd"/>
</dbReference>
<dbReference type="InterPro" id="IPR049111">
    <property type="entry name" value="Flu_PB2_middle"/>
</dbReference>
<dbReference type="InterPro" id="IPR049106">
    <property type="entry name" value="Flu_PB2_N"/>
</dbReference>
<dbReference type="InterPro" id="IPR001591">
    <property type="entry name" value="INV_PB2"/>
</dbReference>
<dbReference type="InterPro" id="IPR049113">
    <property type="entry name" value="PB2_helical"/>
</dbReference>
<dbReference type="InterPro" id="IPR037258">
    <property type="entry name" value="PDB2_C"/>
</dbReference>
<dbReference type="Pfam" id="PF20947">
    <property type="entry name" value="Flu_PB2_1st"/>
    <property type="match status" value="1"/>
</dbReference>
<dbReference type="Pfam" id="PF20948">
    <property type="entry name" value="Flu_PB2_2nd"/>
    <property type="match status" value="1"/>
</dbReference>
<dbReference type="Pfam" id="PF20949">
    <property type="entry name" value="Flu_PB2_3rd"/>
    <property type="match status" value="1"/>
</dbReference>
<dbReference type="Pfam" id="PF20950">
    <property type="entry name" value="Flu_PB2_4th"/>
    <property type="match status" value="1"/>
</dbReference>
<dbReference type="Pfam" id="PF00604">
    <property type="entry name" value="Flu_PB2_5th"/>
    <property type="match status" value="1"/>
</dbReference>
<dbReference type="Pfam" id="PF20951">
    <property type="entry name" value="Flu_PB2_6th"/>
    <property type="match status" value="1"/>
</dbReference>
<dbReference type="Pfam" id="PF20952">
    <property type="entry name" value="Flu_PB2_7th"/>
    <property type="match status" value="1"/>
</dbReference>
<dbReference type="SUPFAM" id="SSF160453">
    <property type="entry name" value="PB2 C-terminal domain-like"/>
    <property type="match status" value="1"/>
</dbReference>
<proteinExistence type="inferred from homology"/>
<accession>Q20P12</accession>
<comment type="function">
    <text evidence="1">Plays an essential role in transcription initiation and cap-stealing mechanism, in which cellular capped pre-mRNAs are used to generate primers for viral transcription. Recognizes and binds the 7-methylguanosine-containing cap of the target pre-RNA which is subsequently cleaved after 10-13 nucleotides by the viral protein PA. Plays a role in the initiation of the viral genome replication and modulates the activity of the ribonucleoprotein (RNP) complex.</text>
</comment>
<comment type="subunit">
    <text evidence="1">Influenza RNA polymerase is composed of three subunits: PB1, PB2 and PA. Interacts (via N-terminus) with PB1 (via C-terminus). Interacts with nucleoprotein NP (via N-terminus).</text>
</comment>
<comment type="subcellular location">
    <subcellularLocation>
        <location evidence="1">Virion</location>
    </subcellularLocation>
    <subcellularLocation>
        <location evidence="1">Host nucleus</location>
    </subcellularLocation>
</comment>
<comment type="similarity">
    <text evidence="1">Belongs to the influenza viruses PB2 family.</text>
</comment>
<reference key="1">
    <citation type="journal article" date="2006" name="Science">
        <title>Large-scale sequence analysis of avian influenza isolates.</title>
        <authorList>
            <person name="Obenauer J.C."/>
            <person name="Denson J."/>
            <person name="Mehta P.K."/>
            <person name="Su X."/>
            <person name="Mukatira S."/>
            <person name="Finkelstein D.B."/>
            <person name="Xu X."/>
            <person name="Wang J."/>
            <person name="Ma J."/>
            <person name="Fan Y."/>
            <person name="Rakestraw K.M."/>
            <person name="Webster R.G."/>
            <person name="Hoffmann E."/>
            <person name="Krauss S."/>
            <person name="Zheng J."/>
            <person name="Zhang Z."/>
            <person name="Naeve C.W."/>
        </authorList>
    </citation>
    <scope>NUCLEOTIDE SEQUENCE [GENOMIC RNA]</scope>
</reference>
<gene>
    <name evidence="1" type="primary">PB2</name>
</gene>
<protein>
    <recommendedName>
        <fullName evidence="1">Polymerase basic protein 2</fullName>
    </recommendedName>
    <alternativeName>
        <fullName evidence="1">RNA-directed RNA polymerase subunit P3</fullName>
    </alternativeName>
</protein>
<organism>
    <name type="scientific">Influenza A virus (strain A/Duck/Czechoslovakia/1956 H4N6)</name>
    <dbReference type="NCBI Taxonomy" id="385590"/>
    <lineage>
        <taxon>Viruses</taxon>
        <taxon>Riboviria</taxon>
        <taxon>Orthornavirae</taxon>
        <taxon>Negarnaviricota</taxon>
        <taxon>Polyploviricotina</taxon>
        <taxon>Insthoviricetes</taxon>
        <taxon>Articulavirales</taxon>
        <taxon>Orthomyxoviridae</taxon>
        <taxon>Alphainfluenzavirus</taxon>
        <taxon>Alphainfluenzavirus influenzae</taxon>
        <taxon>Influenza A virus</taxon>
    </lineage>
</organism>